<gene>
    <name evidence="1" type="primary">tmem41b</name>
    <name evidence="6" type="ORF">zgc:158275</name>
</gene>
<reference key="1">
    <citation type="submission" date="2006-12" db="EMBL/GenBank/DDBJ databases">
        <authorList>
            <consortium name="NIH - Zebrafish Gene Collection (ZGC) project"/>
        </authorList>
    </citation>
    <scope>NUCLEOTIDE SEQUENCE [LARGE SCALE MRNA]</scope>
    <source>
        <tissue>Embryo</tissue>
    </source>
</reference>
<reference key="2">
    <citation type="journal article" date="2012" name="Cell">
        <title>An SMN-dependent U12 splicing event essential for motor circuit function.</title>
        <authorList>
            <person name="Lotti F."/>
            <person name="Imlach W.L."/>
            <person name="Saieva L."/>
            <person name="Beck E.S."/>
            <person name="Hao le T."/>
            <person name="Li D.K."/>
            <person name="Jiao W."/>
            <person name="Mentis G.Z."/>
            <person name="Beattie C.E."/>
            <person name="McCabe B.D."/>
            <person name="Pellizzoni L."/>
        </authorList>
    </citation>
    <scope>FUNCTION</scope>
    <scope>DISRUPTION PHENOTYPE</scope>
</reference>
<keyword id="KW-0072">Autophagy</keyword>
<keyword id="KW-0256">Endoplasmic reticulum</keyword>
<keyword id="KW-0445">Lipid transport</keyword>
<keyword id="KW-0472">Membrane</keyword>
<keyword id="KW-0524">Neurogenesis</keyword>
<keyword id="KW-1185">Reference proteome</keyword>
<keyword id="KW-0812">Transmembrane</keyword>
<keyword id="KW-1133">Transmembrane helix</keyword>
<keyword id="KW-0813">Transport</keyword>
<name>TM41B_DANRE</name>
<protein>
    <recommendedName>
        <fullName evidence="7">Transmembrane protein 41B</fullName>
    </recommendedName>
    <alternativeName>
        <fullName evidence="5">Protein stasimon</fullName>
    </alternativeName>
</protein>
<dbReference type="EMBL" id="BC128830">
    <property type="protein sequence ID" value="AAI28831.1"/>
    <property type="molecule type" value="mRNA"/>
</dbReference>
<dbReference type="RefSeq" id="NP_001073456.1">
    <property type="nucleotide sequence ID" value="NM_001079987.2"/>
</dbReference>
<dbReference type="RefSeq" id="XP_009301841.1">
    <property type="nucleotide sequence ID" value="XM_009303566.2"/>
</dbReference>
<dbReference type="SMR" id="A1A5V7"/>
<dbReference type="FunCoup" id="A1A5V7">
    <property type="interactions" value="1459"/>
</dbReference>
<dbReference type="STRING" id="7955.ENSDARP00000102085"/>
<dbReference type="PaxDb" id="7955-ENSDARP00000102085"/>
<dbReference type="Ensembl" id="ENSDART00000098277">
    <property type="protein sequence ID" value="ENSDARP00000089049"/>
    <property type="gene ID" value="ENSDARG00000080006"/>
</dbReference>
<dbReference type="Ensembl" id="ENSDART00000110614">
    <property type="protein sequence ID" value="ENSDARP00000102085"/>
    <property type="gene ID" value="ENSDARG00000080006"/>
</dbReference>
<dbReference type="Ensembl" id="ENSDART00000171493">
    <property type="protein sequence ID" value="ENSDARP00000134440"/>
    <property type="gene ID" value="ENSDARG00000080006"/>
</dbReference>
<dbReference type="GeneID" id="561208"/>
<dbReference type="KEGG" id="dre:561208"/>
<dbReference type="AGR" id="ZFIN:ZDB-GENE-061215-138"/>
<dbReference type="CTD" id="440026"/>
<dbReference type="ZFIN" id="ZDB-GENE-061215-138">
    <property type="gene designation" value="tmem41b"/>
</dbReference>
<dbReference type="eggNOG" id="KOG3140">
    <property type="taxonomic scope" value="Eukaryota"/>
</dbReference>
<dbReference type="InParanoid" id="A1A5V7"/>
<dbReference type="OMA" id="CIKIPRD"/>
<dbReference type="OrthoDB" id="3364966at2759"/>
<dbReference type="PhylomeDB" id="A1A5V7"/>
<dbReference type="TreeFam" id="TF314301"/>
<dbReference type="PRO" id="PR:A1A5V7"/>
<dbReference type="Proteomes" id="UP000000437">
    <property type="component" value="Chromosome 7"/>
</dbReference>
<dbReference type="Bgee" id="ENSDARG00000080006">
    <property type="expression patterns" value="Expressed in early embryo and 24 other cell types or tissues"/>
</dbReference>
<dbReference type="GO" id="GO:0005789">
    <property type="term" value="C:endoplasmic reticulum membrane"/>
    <property type="evidence" value="ECO:0000250"/>
    <property type="project" value="UniProtKB"/>
</dbReference>
<dbReference type="GO" id="GO:0044233">
    <property type="term" value="C:mitochondria-associated endoplasmic reticulum membrane contact site"/>
    <property type="evidence" value="ECO:0000250"/>
    <property type="project" value="UniProtKB"/>
</dbReference>
<dbReference type="GO" id="GO:0017128">
    <property type="term" value="F:phospholipid scramblase activity"/>
    <property type="evidence" value="ECO:0000250"/>
    <property type="project" value="UniProtKB"/>
</dbReference>
<dbReference type="GO" id="GO:0000045">
    <property type="term" value="P:autophagosome assembly"/>
    <property type="evidence" value="ECO:0000250"/>
    <property type="project" value="UniProtKB"/>
</dbReference>
<dbReference type="GO" id="GO:0008045">
    <property type="term" value="P:motor neuron axon guidance"/>
    <property type="evidence" value="ECO:0000315"/>
    <property type="project" value="ZFIN"/>
</dbReference>
<dbReference type="InterPro" id="IPR045014">
    <property type="entry name" value="TM41A/B"/>
</dbReference>
<dbReference type="InterPro" id="IPR032816">
    <property type="entry name" value="VTT_dom"/>
</dbReference>
<dbReference type="PANTHER" id="PTHR43220">
    <property type="match status" value="1"/>
</dbReference>
<dbReference type="PANTHER" id="PTHR43220:SF18">
    <property type="entry name" value="TRANSMEMBRANE PROTEIN 41B"/>
    <property type="match status" value="1"/>
</dbReference>
<dbReference type="Pfam" id="PF09335">
    <property type="entry name" value="VTT_dom"/>
    <property type="match status" value="1"/>
</dbReference>
<sequence>MAKKRAGNRETESSPLVEQEPRPSKETPVPKGAQSPGGASARMSILLLVVIFACSACVMYLVFRNFPQLSEDEREKIKIPKDMEDAKALGTVLSKYKDTYYTQVLLAYFATYIFLQTFAIPGSIFLSILSGYLYPFPLALFLVCLCSGLGASFCYMLSYLVGRPMVYKYLTERAQKWSQQVDKHREHLINYIIFLRITPFLPNWFINITSPVINVPLGVFFLGTFLGVAPPSFVAINAGTTLYKLTTAGEAVSWNSLLVLGVLAVVSILPVCFQKKLQQKLE</sequence>
<comment type="function">
    <text evidence="1 4">Phospholipid scramblase involved in lipid homeostasis and membrane dynamics processes. Has phospholipid scramblase activity toward cholesterol and phosphatidylserine, as well as phosphatidylethanolamine and phosphatidylcholine. Required for autophagosome formation: participates in early stages of autophagosome biogenesis at the endoplasmic reticulum (ER) membrane by reequilibrating the leaflets of the ER as lipids are extracted by atg2 (atg2a or atg2b) to mediate autophagosome assembly. In addition to autophagy, involved in other processes in which phospholipid scramblase activity is required (By similarity). Required for normal motor neuron development (PubMed:23063131).</text>
</comment>
<comment type="catalytic activity">
    <reaction evidence="1">
        <text>a 1,2-diacyl-sn-glycero-3-phospho-L-serine(in) = a 1,2-diacyl-sn-glycero-3-phospho-L-serine(out)</text>
        <dbReference type="Rhea" id="RHEA:38663"/>
        <dbReference type="ChEBI" id="CHEBI:57262"/>
    </reaction>
</comment>
<comment type="catalytic activity">
    <reaction evidence="1">
        <text>cholesterol(in) = cholesterol(out)</text>
        <dbReference type="Rhea" id="RHEA:39747"/>
        <dbReference type="ChEBI" id="CHEBI:16113"/>
    </reaction>
</comment>
<comment type="catalytic activity">
    <reaction evidence="1">
        <text>a 1,2-diacyl-sn-glycero-3-phosphocholine(in) = a 1,2-diacyl-sn-glycero-3-phosphocholine(out)</text>
        <dbReference type="Rhea" id="RHEA:38571"/>
        <dbReference type="ChEBI" id="CHEBI:57643"/>
    </reaction>
</comment>
<comment type="catalytic activity">
    <reaction evidence="1">
        <text>a 1,2-diacyl-sn-glycero-3-phosphoethanolamine(in) = a 1,2-diacyl-sn-glycero-3-phosphoethanolamine(out)</text>
        <dbReference type="Rhea" id="RHEA:38895"/>
        <dbReference type="ChEBI" id="CHEBI:64612"/>
    </reaction>
</comment>
<comment type="subcellular location">
    <subcellularLocation>
        <location evidence="1">Endoplasmic reticulum membrane</location>
        <topology evidence="2">Multi-pass membrane protein</topology>
    </subcellularLocation>
    <subcellularLocation>
        <location evidence="1">Endomembrane system</location>
    </subcellularLocation>
    <text evidence="1">Localized to specific membrane structures termed mitochondria-associated membranes (MAMs) which connect the endoplasmic reticulum (ER) and the mitochondria.</text>
</comment>
<comment type="domain">
    <text evidence="1">The VTT domain was previously called the SNARE-assoc domain. As there is no evidence that this domain associates with SNARE proteins, it was renamed as VMP1, TMEM41, and TVP38 (VTT) domain.</text>
</comment>
<comment type="disruption phenotype">
    <text evidence="4">Morpholino knockdown of the protein causes severe defects in motor neuron axonal outgrowth.</text>
</comment>
<comment type="similarity">
    <text evidence="7">Belongs to the TMEM41 family.</text>
</comment>
<accession>A1A5V7</accession>
<evidence type="ECO:0000250" key="1">
    <source>
        <dbReference type="UniProtKB" id="Q5BJD5"/>
    </source>
</evidence>
<evidence type="ECO:0000255" key="2"/>
<evidence type="ECO:0000256" key="3">
    <source>
        <dbReference type="SAM" id="MobiDB-lite"/>
    </source>
</evidence>
<evidence type="ECO:0000269" key="4">
    <source>
    </source>
</evidence>
<evidence type="ECO:0000303" key="5">
    <source>
    </source>
</evidence>
<evidence type="ECO:0000303" key="6">
    <source ref="1"/>
</evidence>
<evidence type="ECO:0000305" key="7"/>
<organism>
    <name type="scientific">Danio rerio</name>
    <name type="common">Zebrafish</name>
    <name type="synonym">Brachydanio rerio</name>
    <dbReference type="NCBI Taxonomy" id="7955"/>
    <lineage>
        <taxon>Eukaryota</taxon>
        <taxon>Metazoa</taxon>
        <taxon>Chordata</taxon>
        <taxon>Craniata</taxon>
        <taxon>Vertebrata</taxon>
        <taxon>Euteleostomi</taxon>
        <taxon>Actinopterygii</taxon>
        <taxon>Neopterygii</taxon>
        <taxon>Teleostei</taxon>
        <taxon>Ostariophysi</taxon>
        <taxon>Cypriniformes</taxon>
        <taxon>Danionidae</taxon>
        <taxon>Danioninae</taxon>
        <taxon>Danio</taxon>
    </lineage>
</organism>
<proteinExistence type="evidence at transcript level"/>
<feature type="chain" id="PRO_0000291942" description="Transmembrane protein 41B">
    <location>
        <begin position="1"/>
        <end position="282"/>
    </location>
</feature>
<feature type="transmembrane region" description="Helical" evidence="2">
    <location>
        <begin position="43"/>
        <end position="63"/>
    </location>
</feature>
<feature type="transmembrane region" description="Helical" evidence="2">
    <location>
        <begin position="102"/>
        <end position="122"/>
    </location>
</feature>
<feature type="transmembrane region" description="Helical" evidence="2">
    <location>
        <begin position="138"/>
        <end position="160"/>
    </location>
</feature>
<feature type="transmembrane region" description="Helical" evidence="2">
    <location>
        <begin position="188"/>
        <end position="208"/>
    </location>
</feature>
<feature type="transmembrane region" description="Helical" evidence="2">
    <location>
        <begin position="216"/>
        <end position="236"/>
    </location>
</feature>
<feature type="transmembrane region" description="Helical" evidence="2">
    <location>
        <begin position="251"/>
        <end position="271"/>
    </location>
</feature>
<feature type="region of interest" description="Disordered" evidence="3">
    <location>
        <begin position="1"/>
        <end position="36"/>
    </location>
</feature>
<feature type="region of interest" description="VTT domain; required for its function in autophagy" evidence="1">
    <location>
        <begin position="131"/>
        <end position="242"/>
    </location>
</feature>